<sequence length="502" mass="56304">MTEKKYIVALDQGTTSSRAVVMDHDANIISVSQREFEQIYPKPGWVEHDPMEIWATQSSTLVEVLAKADISSDQIAAIGITNQRETTIVWEKETGKPIYNAIVWQCRRTAEICEHLKRDGMEEYIRNNTGLVIDPYFSGTKVKWILDHVEGSRERARRGELLFGTVDTWLIWKMTQGRVHVTDYTNASRTMLFNIHTLDWDDKMLEVLDIPREMLPEVRRSSEVYGQTNIGGKGGTRIPISGIAGDQQAALFGQLCVKEGMAKNTYGTGCFMLMNTGEKAVKSENGLLTTIACGPTGEVNYALEGAVFMAGASIQWLRDEMKLINDAYDSEYFATKVQNTNGVYVVPAFTGLGAPYWDPYARGAIFGLTRGVNANHIIRATLESIAYQTRDVLEAMQADSGIRLHALRVDGGAVANNFLMQFQSDILGTRVERPEVREVTALGAAYLAGLAVGFWQNLDELQEKAVIEREFRPGIETTERNYRYAGWKKAIKRAMAWEEHDE</sequence>
<evidence type="ECO:0000255" key="1">
    <source>
        <dbReference type="HAMAP-Rule" id="MF_00186"/>
    </source>
</evidence>
<name>GLPK_ECO81</name>
<keyword id="KW-0021">Allosteric enzyme</keyword>
<keyword id="KW-0067">ATP-binding</keyword>
<keyword id="KW-0319">Glycerol metabolism</keyword>
<keyword id="KW-0418">Kinase</keyword>
<keyword id="KW-0479">Metal-binding</keyword>
<keyword id="KW-0547">Nucleotide-binding</keyword>
<keyword id="KW-0808">Transferase</keyword>
<keyword id="KW-0862">Zinc</keyword>
<organism>
    <name type="scientific">Escherichia coli O81 (strain ED1a)</name>
    <dbReference type="NCBI Taxonomy" id="585397"/>
    <lineage>
        <taxon>Bacteria</taxon>
        <taxon>Pseudomonadati</taxon>
        <taxon>Pseudomonadota</taxon>
        <taxon>Gammaproteobacteria</taxon>
        <taxon>Enterobacterales</taxon>
        <taxon>Enterobacteriaceae</taxon>
        <taxon>Escherichia</taxon>
    </lineage>
</organism>
<feature type="chain" id="PRO_1000124194" description="Glycerol kinase">
    <location>
        <begin position="1"/>
        <end position="502"/>
    </location>
</feature>
<feature type="binding site" evidence="1">
    <location>
        <position position="14"/>
    </location>
    <ligand>
        <name>ADP</name>
        <dbReference type="ChEBI" id="CHEBI:456216"/>
    </ligand>
</feature>
<feature type="binding site" evidence="1">
    <location>
        <position position="14"/>
    </location>
    <ligand>
        <name>ATP</name>
        <dbReference type="ChEBI" id="CHEBI:30616"/>
    </ligand>
</feature>
<feature type="binding site" evidence="1">
    <location>
        <position position="14"/>
    </location>
    <ligand>
        <name>sn-glycerol 3-phosphate</name>
        <dbReference type="ChEBI" id="CHEBI:57597"/>
    </ligand>
</feature>
<feature type="binding site" evidence="1">
    <location>
        <position position="15"/>
    </location>
    <ligand>
        <name>ATP</name>
        <dbReference type="ChEBI" id="CHEBI:30616"/>
    </ligand>
</feature>
<feature type="binding site" evidence="1">
    <location>
        <position position="16"/>
    </location>
    <ligand>
        <name>ATP</name>
        <dbReference type="ChEBI" id="CHEBI:30616"/>
    </ligand>
</feature>
<feature type="binding site" evidence="1">
    <location>
        <position position="18"/>
    </location>
    <ligand>
        <name>ADP</name>
        <dbReference type="ChEBI" id="CHEBI:456216"/>
    </ligand>
</feature>
<feature type="binding site" evidence="1">
    <location>
        <position position="84"/>
    </location>
    <ligand>
        <name>glycerol</name>
        <dbReference type="ChEBI" id="CHEBI:17754"/>
    </ligand>
</feature>
<feature type="binding site" evidence="1">
    <location>
        <position position="84"/>
    </location>
    <ligand>
        <name>sn-glycerol 3-phosphate</name>
        <dbReference type="ChEBI" id="CHEBI:57597"/>
    </ligand>
</feature>
<feature type="binding site" evidence="1">
    <location>
        <position position="85"/>
    </location>
    <ligand>
        <name>glycerol</name>
        <dbReference type="ChEBI" id="CHEBI:17754"/>
    </ligand>
</feature>
<feature type="binding site" evidence="1">
    <location>
        <position position="85"/>
    </location>
    <ligand>
        <name>sn-glycerol 3-phosphate</name>
        <dbReference type="ChEBI" id="CHEBI:57597"/>
    </ligand>
</feature>
<feature type="binding site" evidence="1">
    <location>
        <position position="136"/>
    </location>
    <ligand>
        <name>glycerol</name>
        <dbReference type="ChEBI" id="CHEBI:17754"/>
    </ligand>
</feature>
<feature type="binding site" evidence="1">
    <location>
        <position position="136"/>
    </location>
    <ligand>
        <name>sn-glycerol 3-phosphate</name>
        <dbReference type="ChEBI" id="CHEBI:57597"/>
    </ligand>
</feature>
<feature type="binding site" evidence="1">
    <location>
        <position position="246"/>
    </location>
    <ligand>
        <name>glycerol</name>
        <dbReference type="ChEBI" id="CHEBI:17754"/>
    </ligand>
</feature>
<feature type="binding site" evidence="1">
    <location>
        <position position="246"/>
    </location>
    <ligand>
        <name>sn-glycerol 3-phosphate</name>
        <dbReference type="ChEBI" id="CHEBI:57597"/>
    </ligand>
</feature>
<feature type="binding site" evidence="1">
    <location>
        <position position="247"/>
    </location>
    <ligand>
        <name>glycerol</name>
        <dbReference type="ChEBI" id="CHEBI:17754"/>
    </ligand>
</feature>
<feature type="binding site" evidence="1">
    <location>
        <position position="268"/>
    </location>
    <ligand>
        <name>ADP</name>
        <dbReference type="ChEBI" id="CHEBI:456216"/>
    </ligand>
</feature>
<feature type="binding site" evidence="1">
    <location>
        <position position="268"/>
    </location>
    <ligand>
        <name>ATP</name>
        <dbReference type="ChEBI" id="CHEBI:30616"/>
    </ligand>
</feature>
<feature type="binding site" evidence="1">
    <location>
        <position position="311"/>
    </location>
    <ligand>
        <name>ADP</name>
        <dbReference type="ChEBI" id="CHEBI:456216"/>
    </ligand>
</feature>
<feature type="binding site" evidence="1">
    <location>
        <position position="311"/>
    </location>
    <ligand>
        <name>ATP</name>
        <dbReference type="ChEBI" id="CHEBI:30616"/>
    </ligand>
</feature>
<feature type="binding site" evidence="1">
    <location>
        <position position="315"/>
    </location>
    <ligand>
        <name>ATP</name>
        <dbReference type="ChEBI" id="CHEBI:30616"/>
    </ligand>
</feature>
<feature type="binding site" evidence="1">
    <location>
        <position position="412"/>
    </location>
    <ligand>
        <name>ADP</name>
        <dbReference type="ChEBI" id="CHEBI:456216"/>
    </ligand>
</feature>
<feature type="binding site" evidence="1">
    <location>
        <position position="412"/>
    </location>
    <ligand>
        <name>ATP</name>
        <dbReference type="ChEBI" id="CHEBI:30616"/>
    </ligand>
</feature>
<feature type="binding site" evidence="1">
    <location>
        <position position="416"/>
    </location>
    <ligand>
        <name>ADP</name>
        <dbReference type="ChEBI" id="CHEBI:456216"/>
    </ligand>
</feature>
<comment type="function">
    <text evidence="1">Key enzyme in the regulation of glycerol uptake and metabolism. Catalyzes the phosphorylation of glycerol to yield sn-glycerol 3-phosphate.</text>
</comment>
<comment type="catalytic activity">
    <reaction evidence="1">
        <text>glycerol + ATP = sn-glycerol 3-phosphate + ADP + H(+)</text>
        <dbReference type="Rhea" id="RHEA:21644"/>
        <dbReference type="ChEBI" id="CHEBI:15378"/>
        <dbReference type="ChEBI" id="CHEBI:17754"/>
        <dbReference type="ChEBI" id="CHEBI:30616"/>
        <dbReference type="ChEBI" id="CHEBI:57597"/>
        <dbReference type="ChEBI" id="CHEBI:456216"/>
        <dbReference type="EC" id="2.7.1.30"/>
    </reaction>
</comment>
<comment type="activity regulation">
    <text evidence="1">Activity of this regulatory enzyme is affected by several metabolites. Allosterically and non-competitively inhibited by fructose 1,6-bisphosphate (FBP) and unphosphorylated phosphocarrier protein EIIA-Glc (III-Glc), an integral component of the bacterial phosphotransferase (PTS) system.</text>
</comment>
<comment type="pathway">
    <text evidence="1">Polyol metabolism; glycerol degradation via glycerol kinase pathway; sn-glycerol 3-phosphate from glycerol: step 1/1.</text>
</comment>
<comment type="subunit">
    <text evidence="1">Homotetramer and homodimer (in equilibrium). Heterodimer with EIIA-Glc. Binds 1 zinc ion per glycerol kinase EIIA-Glc dimer. The zinc ion is important for dimerization.</text>
</comment>
<comment type="similarity">
    <text evidence="1">Belongs to the FGGY kinase family.</text>
</comment>
<accession>B7N2R7</accession>
<dbReference type="EC" id="2.7.1.30" evidence="1"/>
<dbReference type="EMBL" id="CU928162">
    <property type="protein sequence ID" value="CAR10736.2"/>
    <property type="molecule type" value="Genomic_DNA"/>
</dbReference>
<dbReference type="RefSeq" id="WP_000136803.1">
    <property type="nucleotide sequence ID" value="NC_011745.1"/>
</dbReference>
<dbReference type="SMR" id="B7N2R7"/>
<dbReference type="KEGG" id="ecq:ECED1_4628"/>
<dbReference type="HOGENOM" id="CLU_009281_2_3_6"/>
<dbReference type="UniPathway" id="UPA00618">
    <property type="reaction ID" value="UER00672"/>
</dbReference>
<dbReference type="Proteomes" id="UP000000748">
    <property type="component" value="Chromosome"/>
</dbReference>
<dbReference type="GO" id="GO:0005829">
    <property type="term" value="C:cytosol"/>
    <property type="evidence" value="ECO:0007669"/>
    <property type="project" value="TreeGrafter"/>
</dbReference>
<dbReference type="GO" id="GO:0005524">
    <property type="term" value="F:ATP binding"/>
    <property type="evidence" value="ECO:0007669"/>
    <property type="project" value="UniProtKB-UniRule"/>
</dbReference>
<dbReference type="GO" id="GO:0004370">
    <property type="term" value="F:glycerol kinase activity"/>
    <property type="evidence" value="ECO:0000250"/>
    <property type="project" value="UniProtKB"/>
</dbReference>
<dbReference type="GO" id="GO:0046872">
    <property type="term" value="F:metal ion binding"/>
    <property type="evidence" value="ECO:0007669"/>
    <property type="project" value="UniProtKB-KW"/>
</dbReference>
<dbReference type="GO" id="GO:0019563">
    <property type="term" value="P:glycerol catabolic process"/>
    <property type="evidence" value="ECO:0007669"/>
    <property type="project" value="UniProtKB-UniRule"/>
</dbReference>
<dbReference type="GO" id="GO:0006071">
    <property type="term" value="P:glycerol metabolic process"/>
    <property type="evidence" value="ECO:0000250"/>
    <property type="project" value="UniProtKB"/>
</dbReference>
<dbReference type="GO" id="GO:0006072">
    <property type="term" value="P:glycerol-3-phosphate metabolic process"/>
    <property type="evidence" value="ECO:0007669"/>
    <property type="project" value="InterPro"/>
</dbReference>
<dbReference type="CDD" id="cd07786">
    <property type="entry name" value="FGGY_EcGK_like"/>
    <property type="match status" value="1"/>
</dbReference>
<dbReference type="FunFam" id="3.30.420.40:FF:000007">
    <property type="entry name" value="Glycerol kinase"/>
    <property type="match status" value="1"/>
</dbReference>
<dbReference type="FunFam" id="3.30.420.40:FF:000008">
    <property type="entry name" value="Glycerol kinase"/>
    <property type="match status" value="1"/>
</dbReference>
<dbReference type="Gene3D" id="3.30.420.40">
    <property type="match status" value="2"/>
</dbReference>
<dbReference type="HAMAP" id="MF_00186">
    <property type="entry name" value="Glycerol_kin"/>
    <property type="match status" value="1"/>
</dbReference>
<dbReference type="InterPro" id="IPR043129">
    <property type="entry name" value="ATPase_NBD"/>
</dbReference>
<dbReference type="InterPro" id="IPR000577">
    <property type="entry name" value="Carb_kinase_FGGY"/>
</dbReference>
<dbReference type="InterPro" id="IPR018483">
    <property type="entry name" value="Carb_kinase_FGGY_CS"/>
</dbReference>
<dbReference type="InterPro" id="IPR018485">
    <property type="entry name" value="FGGY_C"/>
</dbReference>
<dbReference type="InterPro" id="IPR018484">
    <property type="entry name" value="FGGY_N"/>
</dbReference>
<dbReference type="InterPro" id="IPR005999">
    <property type="entry name" value="Glycerol_kin"/>
</dbReference>
<dbReference type="NCBIfam" id="TIGR01311">
    <property type="entry name" value="glycerol_kin"/>
    <property type="match status" value="1"/>
</dbReference>
<dbReference type="NCBIfam" id="NF000756">
    <property type="entry name" value="PRK00047.1"/>
    <property type="match status" value="1"/>
</dbReference>
<dbReference type="PANTHER" id="PTHR10196:SF69">
    <property type="entry name" value="GLYCEROL KINASE"/>
    <property type="match status" value="1"/>
</dbReference>
<dbReference type="PANTHER" id="PTHR10196">
    <property type="entry name" value="SUGAR KINASE"/>
    <property type="match status" value="1"/>
</dbReference>
<dbReference type="Pfam" id="PF02782">
    <property type="entry name" value="FGGY_C"/>
    <property type="match status" value="1"/>
</dbReference>
<dbReference type="Pfam" id="PF00370">
    <property type="entry name" value="FGGY_N"/>
    <property type="match status" value="1"/>
</dbReference>
<dbReference type="PIRSF" id="PIRSF000538">
    <property type="entry name" value="GlpK"/>
    <property type="match status" value="1"/>
</dbReference>
<dbReference type="SUPFAM" id="SSF53067">
    <property type="entry name" value="Actin-like ATPase domain"/>
    <property type="match status" value="2"/>
</dbReference>
<dbReference type="PROSITE" id="PS00933">
    <property type="entry name" value="FGGY_KINASES_1"/>
    <property type="match status" value="1"/>
</dbReference>
<dbReference type="PROSITE" id="PS00445">
    <property type="entry name" value="FGGY_KINASES_2"/>
    <property type="match status" value="1"/>
</dbReference>
<proteinExistence type="inferred from homology"/>
<reference key="1">
    <citation type="journal article" date="2009" name="PLoS Genet.">
        <title>Organised genome dynamics in the Escherichia coli species results in highly diverse adaptive paths.</title>
        <authorList>
            <person name="Touchon M."/>
            <person name="Hoede C."/>
            <person name="Tenaillon O."/>
            <person name="Barbe V."/>
            <person name="Baeriswyl S."/>
            <person name="Bidet P."/>
            <person name="Bingen E."/>
            <person name="Bonacorsi S."/>
            <person name="Bouchier C."/>
            <person name="Bouvet O."/>
            <person name="Calteau A."/>
            <person name="Chiapello H."/>
            <person name="Clermont O."/>
            <person name="Cruveiller S."/>
            <person name="Danchin A."/>
            <person name="Diard M."/>
            <person name="Dossat C."/>
            <person name="Karoui M.E."/>
            <person name="Frapy E."/>
            <person name="Garry L."/>
            <person name="Ghigo J.M."/>
            <person name="Gilles A.M."/>
            <person name="Johnson J."/>
            <person name="Le Bouguenec C."/>
            <person name="Lescat M."/>
            <person name="Mangenot S."/>
            <person name="Martinez-Jehanne V."/>
            <person name="Matic I."/>
            <person name="Nassif X."/>
            <person name="Oztas S."/>
            <person name="Petit M.A."/>
            <person name="Pichon C."/>
            <person name="Rouy Z."/>
            <person name="Ruf C.S."/>
            <person name="Schneider D."/>
            <person name="Tourret J."/>
            <person name="Vacherie B."/>
            <person name="Vallenet D."/>
            <person name="Medigue C."/>
            <person name="Rocha E.P.C."/>
            <person name="Denamur E."/>
        </authorList>
    </citation>
    <scope>NUCLEOTIDE SEQUENCE [LARGE SCALE GENOMIC DNA]</scope>
    <source>
        <strain>ED1a</strain>
    </source>
</reference>
<gene>
    <name evidence="1" type="primary">glpK</name>
    <name type="ordered locus">ECED1_4628</name>
</gene>
<protein>
    <recommendedName>
        <fullName evidence="1">Glycerol kinase</fullName>
        <ecNumber evidence="1">2.7.1.30</ecNumber>
    </recommendedName>
    <alternativeName>
        <fullName evidence="1">ATP:glycerol 3-phosphotransferase</fullName>
    </alternativeName>
    <alternativeName>
        <fullName evidence="1">Glycerokinase</fullName>
        <shortName evidence="1">GK</shortName>
    </alternativeName>
</protein>